<feature type="chain" id="PRO_0000309141" description="Serine/threonine transporter SstT">
    <location>
        <begin position="1"/>
        <end position="404"/>
    </location>
</feature>
<feature type="transmembrane region" description="Helical" evidence="1">
    <location>
        <begin position="17"/>
        <end position="37"/>
    </location>
</feature>
<feature type="transmembrane region" description="Helical" evidence="1">
    <location>
        <begin position="39"/>
        <end position="59"/>
    </location>
</feature>
<feature type="transmembrane region" description="Helical" evidence="1">
    <location>
        <begin position="75"/>
        <end position="95"/>
    </location>
</feature>
<feature type="transmembrane region" description="Helical" evidence="1">
    <location>
        <begin position="138"/>
        <end position="158"/>
    </location>
</feature>
<feature type="transmembrane region" description="Helical" evidence="1">
    <location>
        <begin position="179"/>
        <end position="199"/>
    </location>
</feature>
<feature type="transmembrane region" description="Helical" evidence="1">
    <location>
        <begin position="212"/>
        <end position="232"/>
    </location>
</feature>
<feature type="transmembrane region" description="Helical" evidence="1">
    <location>
        <begin position="287"/>
        <end position="307"/>
    </location>
</feature>
<feature type="transmembrane region" description="Helical" evidence="1">
    <location>
        <begin position="313"/>
        <end position="333"/>
    </location>
</feature>
<reference key="1">
    <citation type="journal article" date="2006" name="Proc. Natl. Acad. Sci. U.S.A.">
        <title>Molecular genetic anatomy of inter- and intraserotype variation in the human bacterial pathogen group A Streptococcus.</title>
        <authorList>
            <person name="Beres S.B."/>
            <person name="Richter E.W."/>
            <person name="Nagiec M.J."/>
            <person name="Sumby P."/>
            <person name="Porcella S.F."/>
            <person name="DeLeo F.R."/>
            <person name="Musser J.M."/>
        </authorList>
    </citation>
    <scope>NUCLEOTIDE SEQUENCE [LARGE SCALE GENOMIC DNA]</scope>
    <source>
        <strain>MGAS10270</strain>
    </source>
</reference>
<proteinExistence type="inferred from homology"/>
<gene>
    <name evidence="1" type="primary">sstT</name>
    <name type="ordered locus">MGAS10270_Spy0272</name>
</gene>
<dbReference type="EMBL" id="CP000260">
    <property type="protein sequence ID" value="ABF33337.1"/>
    <property type="molecule type" value="Genomic_DNA"/>
</dbReference>
<dbReference type="SMR" id="Q1JII6"/>
<dbReference type="KEGG" id="sph:MGAS10270_Spy0272"/>
<dbReference type="HOGENOM" id="CLU_044581_0_0_9"/>
<dbReference type="Proteomes" id="UP000002436">
    <property type="component" value="Chromosome"/>
</dbReference>
<dbReference type="GO" id="GO:0005886">
    <property type="term" value="C:plasma membrane"/>
    <property type="evidence" value="ECO:0007669"/>
    <property type="project" value="UniProtKB-SubCell"/>
</dbReference>
<dbReference type="GO" id="GO:0015171">
    <property type="term" value="F:amino acid transmembrane transporter activity"/>
    <property type="evidence" value="ECO:0007669"/>
    <property type="project" value="UniProtKB-UniRule"/>
</dbReference>
<dbReference type="GO" id="GO:0015293">
    <property type="term" value="F:symporter activity"/>
    <property type="evidence" value="ECO:0007669"/>
    <property type="project" value="UniProtKB-UniRule"/>
</dbReference>
<dbReference type="GO" id="GO:0032329">
    <property type="term" value="P:serine transport"/>
    <property type="evidence" value="ECO:0007669"/>
    <property type="project" value="InterPro"/>
</dbReference>
<dbReference type="GO" id="GO:0015826">
    <property type="term" value="P:threonine transport"/>
    <property type="evidence" value="ECO:0007669"/>
    <property type="project" value="InterPro"/>
</dbReference>
<dbReference type="FunFam" id="1.10.3860.10:FF:000003">
    <property type="entry name" value="Serine/threonine transporter sstT"/>
    <property type="match status" value="1"/>
</dbReference>
<dbReference type="Gene3D" id="1.10.3860.10">
    <property type="entry name" value="Sodium:dicarboxylate symporter"/>
    <property type="match status" value="1"/>
</dbReference>
<dbReference type="HAMAP" id="MF_01582">
    <property type="entry name" value="Ser_Thr_transp_SstT"/>
    <property type="match status" value="1"/>
</dbReference>
<dbReference type="InterPro" id="IPR001991">
    <property type="entry name" value="Na-dicarboxylate_symporter"/>
</dbReference>
<dbReference type="InterPro" id="IPR036458">
    <property type="entry name" value="Na:dicarbo_symporter_sf"/>
</dbReference>
<dbReference type="InterPro" id="IPR023025">
    <property type="entry name" value="Ser_Thr_transp_SstT"/>
</dbReference>
<dbReference type="NCBIfam" id="NF010151">
    <property type="entry name" value="PRK13628.1"/>
    <property type="match status" value="1"/>
</dbReference>
<dbReference type="PANTHER" id="PTHR42865">
    <property type="entry name" value="PROTON/GLUTAMATE-ASPARTATE SYMPORTER"/>
    <property type="match status" value="1"/>
</dbReference>
<dbReference type="PANTHER" id="PTHR42865:SF7">
    <property type="entry name" value="PROTON_GLUTAMATE-ASPARTATE SYMPORTER"/>
    <property type="match status" value="1"/>
</dbReference>
<dbReference type="Pfam" id="PF00375">
    <property type="entry name" value="SDF"/>
    <property type="match status" value="1"/>
</dbReference>
<dbReference type="PRINTS" id="PR00173">
    <property type="entry name" value="EDTRNSPORT"/>
</dbReference>
<dbReference type="SUPFAM" id="SSF118215">
    <property type="entry name" value="Proton glutamate symport protein"/>
    <property type="match status" value="1"/>
</dbReference>
<accession>Q1JII6</accession>
<protein>
    <recommendedName>
        <fullName evidence="1">Serine/threonine transporter SstT</fullName>
    </recommendedName>
    <alternativeName>
        <fullName evidence="1">Na(+)/serine-threonine symporter</fullName>
    </alternativeName>
</protein>
<comment type="function">
    <text evidence="1">Involved in the import of serine and threonine into the cell, with the concomitant import of sodium (symport system).</text>
</comment>
<comment type="catalytic activity">
    <reaction evidence="1">
        <text>L-serine(in) + Na(+)(in) = L-serine(out) + Na(+)(out)</text>
        <dbReference type="Rhea" id="RHEA:29575"/>
        <dbReference type="ChEBI" id="CHEBI:29101"/>
        <dbReference type="ChEBI" id="CHEBI:33384"/>
    </reaction>
    <physiologicalReaction direction="right-to-left" evidence="1">
        <dbReference type="Rhea" id="RHEA:29577"/>
    </physiologicalReaction>
</comment>
<comment type="catalytic activity">
    <reaction evidence="1">
        <text>L-threonine(in) + Na(+)(in) = L-threonine(out) + Na(+)(out)</text>
        <dbReference type="Rhea" id="RHEA:69999"/>
        <dbReference type="ChEBI" id="CHEBI:29101"/>
        <dbReference type="ChEBI" id="CHEBI:57926"/>
    </reaction>
    <physiologicalReaction direction="right-to-left" evidence="1">
        <dbReference type="Rhea" id="RHEA:70001"/>
    </physiologicalReaction>
</comment>
<comment type="subcellular location">
    <subcellularLocation>
        <location evidence="1">Cell membrane</location>
        <topology evidence="1">Multi-pass membrane protein</topology>
    </subcellularLocation>
</comment>
<comment type="similarity">
    <text evidence="1">Belongs to the dicarboxylate/amino acid:cation symporter (DAACS) (TC 2.A.23) family.</text>
</comment>
<name>SSTT_STRPD</name>
<keyword id="KW-0029">Amino-acid transport</keyword>
<keyword id="KW-1003">Cell membrane</keyword>
<keyword id="KW-0472">Membrane</keyword>
<keyword id="KW-0769">Symport</keyword>
<keyword id="KW-0812">Transmembrane</keyword>
<keyword id="KW-1133">Transmembrane helix</keyword>
<keyword id="KW-0813">Transport</keyword>
<evidence type="ECO:0000255" key="1">
    <source>
        <dbReference type="HAMAP-Rule" id="MF_01582"/>
    </source>
</evidence>
<organism>
    <name type="scientific">Streptococcus pyogenes serotype M2 (strain MGAS10270)</name>
    <dbReference type="NCBI Taxonomy" id="370552"/>
    <lineage>
        <taxon>Bacteria</taxon>
        <taxon>Bacillati</taxon>
        <taxon>Bacillota</taxon>
        <taxon>Bacilli</taxon>
        <taxon>Lactobacillales</taxon>
        <taxon>Streptococcaceae</taxon>
        <taxon>Streptococcus</taxon>
    </lineage>
</organism>
<sequence>MKKIYDLWVRVSLIKKIGIGVVIGVMLGILAPDLTGFSILGKLFVGGLKAIAPLLVFALVSQAISHQKKGRQTNMTLIIVLYLFGTFASALVAVLTAYLFPLTLVLNTPVNTELSPPQGVAEVFQSLLLKLVDNPINALATANYIGVLSWAIIFGLALKAASQETKHLIKTAAEVTSQIVVWIINLAPIGIMSLVFTTISENGVGILSDYAFLILVLVGTMVFVALVVNPLIAVLITRQNPYPLVLRCLRESGLTAFFTRSSAANIPVNMQLCQKIGLSKDTYSVSIPLGATINMGGAAITINVLTLAAVHTFGIPIDFLTALLLSVVAAVSACGASGVAGGSLLLIPVACSLFGISNDLAMQVVGVGFIVGVIQDSCETALNSSTDVLFTAIAENAFWKRKKA</sequence>